<gene>
    <name type="ordered locus">At5g61530</name>
    <name type="ORF">K11J9.10</name>
</gene>
<keyword id="KW-0025">Alternative splicing</keyword>
<keyword id="KW-0343">GTPase activation</keyword>
<keyword id="KW-0597">Phosphoprotein</keyword>
<keyword id="KW-1185">Reference proteome</keyword>
<comment type="alternative products">
    <event type="alternative splicing"/>
    <isoform>
        <id>Q3E875-1</id>
        <name>1</name>
        <sequence type="displayed"/>
    </isoform>
    <isoform>
        <id>Q3E875-2</id>
        <name>2</name>
        <sequence type="described" ref="VSP_032379"/>
    </isoform>
</comment>
<protein>
    <recommendedName>
        <fullName>Uncharacterized Rho GTPase-activating protein At5g61530</fullName>
    </recommendedName>
</protein>
<name>RGAPX_ARATH</name>
<proteinExistence type="evidence at protein level"/>
<accession>Q3E875</accession>
<accession>Q8LEE6</accession>
<accession>Q94AM7</accession>
<evidence type="ECO:0000255" key="1">
    <source>
        <dbReference type="PROSITE-ProRule" id="PRU00172"/>
    </source>
</evidence>
<evidence type="ECO:0000256" key="2">
    <source>
        <dbReference type="SAM" id="MobiDB-lite"/>
    </source>
</evidence>
<evidence type="ECO:0000303" key="3">
    <source>
    </source>
</evidence>
<evidence type="ECO:0007744" key="4">
    <source>
    </source>
</evidence>
<dbReference type="EMBL" id="AB012239">
    <property type="status" value="NOT_ANNOTATED_CDS"/>
    <property type="molecule type" value="Genomic_DNA"/>
</dbReference>
<dbReference type="EMBL" id="CP002688">
    <property type="protein sequence ID" value="AED97480.1"/>
    <property type="molecule type" value="Genomic_DNA"/>
</dbReference>
<dbReference type="EMBL" id="CP002688">
    <property type="protein sequence ID" value="AED97481.1"/>
    <property type="molecule type" value="Genomic_DNA"/>
</dbReference>
<dbReference type="EMBL" id="CP002688">
    <property type="protein sequence ID" value="ANM70654.1"/>
    <property type="molecule type" value="Genomic_DNA"/>
</dbReference>
<dbReference type="EMBL" id="AY045924">
    <property type="protein sequence ID" value="AAK76598.1"/>
    <property type="molecule type" value="mRNA"/>
</dbReference>
<dbReference type="EMBL" id="AY133882">
    <property type="protein sequence ID" value="AAM91816.1"/>
    <property type="molecule type" value="mRNA"/>
</dbReference>
<dbReference type="EMBL" id="AY085460">
    <property type="protein sequence ID" value="AAM62686.1"/>
    <property type="molecule type" value="mRNA"/>
</dbReference>
<dbReference type="EMBL" id="BX831138">
    <property type="status" value="NOT_ANNOTATED_CDS"/>
    <property type="molecule type" value="mRNA"/>
</dbReference>
<dbReference type="RefSeq" id="NP_001332245.1">
    <molecule id="Q3E875-2"/>
    <property type="nucleotide sequence ID" value="NM_001345479.1"/>
</dbReference>
<dbReference type="RefSeq" id="NP_568935.1">
    <molecule id="Q3E875-1"/>
    <property type="nucleotide sequence ID" value="NM_125546.3"/>
</dbReference>
<dbReference type="RefSeq" id="NP_974973.1">
    <molecule id="Q3E875-2"/>
    <property type="nucleotide sequence ID" value="NM_203244.2"/>
</dbReference>
<dbReference type="SMR" id="Q3E875"/>
<dbReference type="BioGRID" id="21518">
    <property type="interactions" value="1"/>
</dbReference>
<dbReference type="FunCoup" id="Q3E875">
    <property type="interactions" value="287"/>
</dbReference>
<dbReference type="IntAct" id="Q3E875">
    <property type="interactions" value="1"/>
</dbReference>
<dbReference type="STRING" id="3702.Q3E875"/>
<dbReference type="iPTMnet" id="Q3E875"/>
<dbReference type="PaxDb" id="3702-AT5G61530.1"/>
<dbReference type="ProteomicsDB" id="236884">
    <molecule id="Q3E875-1"/>
</dbReference>
<dbReference type="EnsemblPlants" id="AT5G61530.1">
    <molecule id="Q3E875-1"/>
    <property type="protein sequence ID" value="AT5G61530.1"/>
    <property type="gene ID" value="AT5G61530"/>
</dbReference>
<dbReference type="EnsemblPlants" id="AT5G61530.2">
    <molecule id="Q3E875-2"/>
    <property type="protein sequence ID" value="AT5G61530.2"/>
    <property type="gene ID" value="AT5G61530"/>
</dbReference>
<dbReference type="EnsemblPlants" id="AT5G61530.5">
    <molecule id="Q3E875-2"/>
    <property type="protein sequence ID" value="AT5G61530.5"/>
    <property type="gene ID" value="AT5G61530"/>
</dbReference>
<dbReference type="GeneID" id="836274"/>
<dbReference type="Gramene" id="AT5G61530.1">
    <molecule id="Q3E875-1"/>
    <property type="protein sequence ID" value="AT5G61530.1"/>
    <property type="gene ID" value="AT5G61530"/>
</dbReference>
<dbReference type="Gramene" id="AT5G61530.2">
    <molecule id="Q3E875-2"/>
    <property type="protein sequence ID" value="AT5G61530.2"/>
    <property type="gene ID" value="AT5G61530"/>
</dbReference>
<dbReference type="Gramene" id="AT5G61530.5">
    <molecule id="Q3E875-2"/>
    <property type="protein sequence ID" value="AT5G61530.5"/>
    <property type="gene ID" value="AT5G61530"/>
</dbReference>
<dbReference type="KEGG" id="ath:AT5G61530"/>
<dbReference type="Araport" id="AT5G61530"/>
<dbReference type="TAIR" id="AT5G61530"/>
<dbReference type="eggNOG" id="KOG4270">
    <property type="taxonomic scope" value="Eukaryota"/>
</dbReference>
<dbReference type="HOGENOM" id="CLU_040482_0_0_1"/>
<dbReference type="InParanoid" id="Q3E875"/>
<dbReference type="OMA" id="MWQQGDS"/>
<dbReference type="OrthoDB" id="19923at2759"/>
<dbReference type="PhylomeDB" id="Q3E875"/>
<dbReference type="PRO" id="PR:Q3E875"/>
<dbReference type="Proteomes" id="UP000006548">
    <property type="component" value="Chromosome 5"/>
</dbReference>
<dbReference type="ExpressionAtlas" id="Q3E875">
    <property type="expression patterns" value="baseline and differential"/>
</dbReference>
<dbReference type="GO" id="GO:0005096">
    <property type="term" value="F:GTPase activator activity"/>
    <property type="evidence" value="ECO:0007669"/>
    <property type="project" value="UniProtKB-KW"/>
</dbReference>
<dbReference type="GO" id="GO:0007165">
    <property type="term" value="P:signal transduction"/>
    <property type="evidence" value="ECO:0007669"/>
    <property type="project" value="InterPro"/>
</dbReference>
<dbReference type="CDD" id="cd00159">
    <property type="entry name" value="RhoGAP"/>
    <property type="match status" value="1"/>
</dbReference>
<dbReference type="Gene3D" id="1.10.555.10">
    <property type="entry name" value="Rho GTPase activation protein"/>
    <property type="match status" value="1"/>
</dbReference>
<dbReference type="InterPro" id="IPR008936">
    <property type="entry name" value="Rho_GTPase_activation_prot"/>
</dbReference>
<dbReference type="InterPro" id="IPR000198">
    <property type="entry name" value="RhoGAP_dom"/>
</dbReference>
<dbReference type="PANTHER" id="PTHR47367">
    <property type="entry name" value="AUXIN-REGULATED PROTEIN-LIKE"/>
    <property type="match status" value="1"/>
</dbReference>
<dbReference type="PANTHER" id="PTHR47367:SF1">
    <property type="entry name" value="OS07G0486500 PROTEIN"/>
    <property type="match status" value="1"/>
</dbReference>
<dbReference type="Pfam" id="PF00620">
    <property type="entry name" value="RhoGAP"/>
    <property type="match status" value="1"/>
</dbReference>
<dbReference type="SMART" id="SM00324">
    <property type="entry name" value="RhoGAP"/>
    <property type="match status" value="1"/>
</dbReference>
<dbReference type="SUPFAM" id="SSF48350">
    <property type="entry name" value="GTPase activation domain, GAP"/>
    <property type="match status" value="1"/>
</dbReference>
<dbReference type="PROSITE" id="PS50238">
    <property type="entry name" value="RHOGAP"/>
    <property type="match status" value="1"/>
</dbReference>
<sequence>MPSLISQQWQERTSGFFSSSGTKLREAGQTAGSFVGEVAKDAKVNVADVAERVGSLFKSRWAILQQPATRHAVQEHLITAAATTGTFVRKGITETKEKVSVGKIKVEEAAKKTAQKSKTILTDIERWQKGVASSDVFGVAIEITVQRQESSRPIPLILVKCADYLILTGLNSPNLFKAEGDRKLIQQLVSAYNQDPRASIPEGVNPVDVAALLKYYLASLPTPLTTFELYNEIKDARSSIHRMRQSLQKLSNVNYNTLEFITALLLRVSQKSLLNKMDSHSLAMEMAPVIMWREDNRPESYREYWRRPSRSPKKSNDFETATPWDLLSDEGEGPDASSSIPLDDIARVDFGAVEVVQCLIEHHNAIFTDAAETVWR</sequence>
<reference key="1">
    <citation type="journal article" date="1998" name="DNA Res.">
        <title>Structural analysis of Arabidopsis thaliana chromosome 5. VI. Sequence features of the regions of 1,367,185 bp covered by 19 physically assigned P1 and TAC clones.</title>
        <authorList>
            <person name="Kotani H."/>
            <person name="Nakamura Y."/>
            <person name="Sato S."/>
            <person name="Asamizu E."/>
            <person name="Kaneko T."/>
            <person name="Miyajima N."/>
            <person name="Tabata S."/>
        </authorList>
    </citation>
    <scope>NUCLEOTIDE SEQUENCE [LARGE SCALE GENOMIC DNA]</scope>
    <source>
        <strain>cv. Columbia</strain>
    </source>
</reference>
<reference key="2">
    <citation type="journal article" date="2017" name="Plant J.">
        <title>Araport11: a complete reannotation of the Arabidopsis thaliana reference genome.</title>
        <authorList>
            <person name="Cheng C.Y."/>
            <person name="Krishnakumar V."/>
            <person name="Chan A.P."/>
            <person name="Thibaud-Nissen F."/>
            <person name="Schobel S."/>
            <person name="Town C.D."/>
        </authorList>
    </citation>
    <scope>GENOME REANNOTATION</scope>
    <source>
        <strain>cv. Columbia</strain>
    </source>
</reference>
<reference key="3">
    <citation type="journal article" date="2003" name="Science">
        <title>Empirical analysis of transcriptional activity in the Arabidopsis genome.</title>
        <authorList>
            <person name="Yamada K."/>
            <person name="Lim J."/>
            <person name="Dale J.M."/>
            <person name="Chen H."/>
            <person name="Shinn P."/>
            <person name="Palm C.J."/>
            <person name="Southwick A.M."/>
            <person name="Wu H.C."/>
            <person name="Kim C.J."/>
            <person name="Nguyen M."/>
            <person name="Pham P.K."/>
            <person name="Cheuk R.F."/>
            <person name="Karlin-Newmann G."/>
            <person name="Liu S.X."/>
            <person name="Lam B."/>
            <person name="Sakano H."/>
            <person name="Wu T."/>
            <person name="Yu G."/>
            <person name="Miranda M."/>
            <person name="Quach H.L."/>
            <person name="Tripp M."/>
            <person name="Chang C.H."/>
            <person name="Lee J.M."/>
            <person name="Toriumi M.J."/>
            <person name="Chan M.M."/>
            <person name="Tang C.C."/>
            <person name="Onodera C.S."/>
            <person name="Deng J.M."/>
            <person name="Akiyama K."/>
            <person name="Ansari Y."/>
            <person name="Arakawa T."/>
            <person name="Banh J."/>
            <person name="Banno F."/>
            <person name="Bowser L."/>
            <person name="Brooks S.Y."/>
            <person name="Carninci P."/>
            <person name="Chao Q."/>
            <person name="Choy N."/>
            <person name="Enju A."/>
            <person name="Goldsmith A.D."/>
            <person name="Gurjal M."/>
            <person name="Hansen N.F."/>
            <person name="Hayashizaki Y."/>
            <person name="Johnson-Hopson C."/>
            <person name="Hsuan V.W."/>
            <person name="Iida K."/>
            <person name="Karnes M."/>
            <person name="Khan S."/>
            <person name="Koesema E."/>
            <person name="Ishida J."/>
            <person name="Jiang P.X."/>
            <person name="Jones T."/>
            <person name="Kawai J."/>
            <person name="Kamiya A."/>
            <person name="Meyers C."/>
            <person name="Nakajima M."/>
            <person name="Narusaka M."/>
            <person name="Seki M."/>
            <person name="Sakurai T."/>
            <person name="Satou M."/>
            <person name="Tamse R."/>
            <person name="Vaysberg M."/>
            <person name="Wallender E.K."/>
            <person name="Wong C."/>
            <person name="Yamamura Y."/>
            <person name="Yuan S."/>
            <person name="Shinozaki K."/>
            <person name="Davis R.W."/>
            <person name="Theologis A."/>
            <person name="Ecker J.R."/>
        </authorList>
    </citation>
    <scope>NUCLEOTIDE SEQUENCE [LARGE SCALE MRNA] (ISOFORM 1)</scope>
    <source>
        <strain>cv. Columbia</strain>
    </source>
</reference>
<reference key="4">
    <citation type="submission" date="2002-03" db="EMBL/GenBank/DDBJ databases">
        <title>Full-length cDNA from Arabidopsis thaliana.</title>
        <authorList>
            <person name="Brover V.V."/>
            <person name="Troukhan M.E."/>
            <person name="Alexandrov N.A."/>
            <person name="Lu Y.-P."/>
            <person name="Flavell R.B."/>
            <person name="Feldmann K.A."/>
        </authorList>
    </citation>
    <scope>NUCLEOTIDE SEQUENCE [LARGE SCALE MRNA] (ISOFORM 1)</scope>
</reference>
<reference key="5">
    <citation type="journal article" date="2004" name="Genome Res.">
        <title>Whole genome sequence comparisons and 'full-length' cDNA sequences: a combined approach to evaluate and improve Arabidopsis genome annotation.</title>
        <authorList>
            <person name="Castelli V."/>
            <person name="Aury J.-M."/>
            <person name="Jaillon O."/>
            <person name="Wincker P."/>
            <person name="Clepet C."/>
            <person name="Menard M."/>
            <person name="Cruaud C."/>
            <person name="Quetier F."/>
            <person name="Scarpelli C."/>
            <person name="Schaechter V."/>
            <person name="Temple G."/>
            <person name="Caboche M."/>
            <person name="Weissenbach J."/>
            <person name="Salanoubat M."/>
        </authorList>
    </citation>
    <scope>NUCLEOTIDE SEQUENCE [LARGE SCALE MRNA] (ISOFORM 2)</scope>
    <source>
        <strain>cv. Columbia</strain>
    </source>
</reference>
<reference key="6">
    <citation type="journal article" date="2007" name="Mol. Cell. Proteomics">
        <title>Temporal analysis of sucrose-induced phosphorylation changes in plasma membrane proteins of Arabidopsis.</title>
        <authorList>
            <person name="Niittylae T."/>
            <person name="Fuglsang A.T."/>
            <person name="Palmgren M.G."/>
            <person name="Frommer W.B."/>
            <person name="Schulze W.X."/>
        </authorList>
    </citation>
    <scope>PHOSPHORYLATION [LARGE SCALE ANALYSIS] AT SER-59</scope>
    <scope>IDENTIFICATION BY MASS SPECTROMETRY [LARGE SCALE ANALYSIS]</scope>
    <source>
        <tissue>Seedling</tissue>
    </source>
</reference>
<feature type="chain" id="PRO_0000324840" description="Uncharacterized Rho GTPase-activating protein At5g61530">
    <location>
        <begin position="1"/>
        <end position="376"/>
    </location>
</feature>
<feature type="domain" description="Rho-GAP" evidence="1">
    <location>
        <begin position="139"/>
        <end position="367"/>
    </location>
</feature>
<feature type="region of interest" description="Disordered" evidence="2">
    <location>
        <begin position="307"/>
        <end position="338"/>
    </location>
</feature>
<feature type="site" description="Arginine finger; crucial for GTP hydrolysis by stabilizing the transition state" evidence="1">
    <location>
        <position position="177"/>
    </location>
</feature>
<feature type="modified residue" description="Phosphoserine" evidence="4">
    <location>
        <position position="59"/>
    </location>
</feature>
<feature type="splice variant" id="VSP_032379" description="In isoform 2." evidence="3">
    <location>
        <begin position="268"/>
        <end position="276"/>
    </location>
</feature>
<organism>
    <name type="scientific">Arabidopsis thaliana</name>
    <name type="common">Mouse-ear cress</name>
    <dbReference type="NCBI Taxonomy" id="3702"/>
    <lineage>
        <taxon>Eukaryota</taxon>
        <taxon>Viridiplantae</taxon>
        <taxon>Streptophyta</taxon>
        <taxon>Embryophyta</taxon>
        <taxon>Tracheophyta</taxon>
        <taxon>Spermatophyta</taxon>
        <taxon>Magnoliopsida</taxon>
        <taxon>eudicotyledons</taxon>
        <taxon>Gunneridae</taxon>
        <taxon>Pentapetalae</taxon>
        <taxon>rosids</taxon>
        <taxon>malvids</taxon>
        <taxon>Brassicales</taxon>
        <taxon>Brassicaceae</taxon>
        <taxon>Camelineae</taxon>
        <taxon>Arabidopsis</taxon>
    </lineage>
</organism>